<organism>
    <name type="scientific">Pseudomonas paraeruginosa (strain DSM 24068 / PA7)</name>
    <name type="common">Pseudomonas aeruginosa (strain PA7)</name>
    <dbReference type="NCBI Taxonomy" id="381754"/>
    <lineage>
        <taxon>Bacteria</taxon>
        <taxon>Pseudomonadati</taxon>
        <taxon>Pseudomonadota</taxon>
        <taxon>Gammaproteobacteria</taxon>
        <taxon>Pseudomonadales</taxon>
        <taxon>Pseudomonadaceae</taxon>
        <taxon>Pseudomonas</taxon>
        <taxon>Pseudomonas paraeruginosa</taxon>
    </lineage>
</organism>
<sequence length="137" mass="14308">MNVPRGWLAALGSVLLVSAAQLGMRWGMSRLPLPEAWAGQTPEHAALLAVALAVAAYAASLLCWLAALRHLPLGRAYSLLSASYALVYLLAASLPAFEETFTTGKTLGVGLVVLGVLTVNARRTAAAPAHHPSRKAL</sequence>
<protein>
    <recommendedName>
        <fullName evidence="1">Probable 4-amino-4-deoxy-L-arabinose-phosphoundecaprenol flippase subunit ArnF</fullName>
        <shortName evidence="1">L-Ara4N-phosphoundecaprenol flippase subunit ArnF</shortName>
    </recommendedName>
    <alternativeName>
        <fullName evidence="1">Undecaprenyl phosphate-aminoarabinose flippase subunit ArnF</fullName>
    </alternativeName>
</protein>
<comment type="function">
    <text evidence="1">Translocates 4-amino-4-deoxy-L-arabinose-phosphoundecaprenol (alpha-L-Ara4N-phosphoundecaprenol) from the cytoplasmic to the periplasmic side of the inner membrane.</text>
</comment>
<comment type="pathway">
    <text evidence="1">Bacterial outer membrane biogenesis; lipopolysaccharide biosynthesis.</text>
</comment>
<comment type="subunit">
    <text evidence="1">Heterodimer of ArnE and ArnF.</text>
</comment>
<comment type="subcellular location">
    <subcellularLocation>
        <location evidence="1">Cell inner membrane</location>
        <topology evidence="1">Multi-pass membrane protein</topology>
    </subcellularLocation>
</comment>
<comment type="similarity">
    <text evidence="1">Belongs to the ArnF family.</text>
</comment>
<keyword id="KW-0997">Cell inner membrane</keyword>
<keyword id="KW-1003">Cell membrane</keyword>
<keyword id="KW-0441">Lipid A biosynthesis</keyword>
<keyword id="KW-0444">Lipid biosynthesis</keyword>
<keyword id="KW-0443">Lipid metabolism</keyword>
<keyword id="KW-0448">Lipopolysaccharide biosynthesis</keyword>
<keyword id="KW-0472">Membrane</keyword>
<keyword id="KW-0812">Transmembrane</keyword>
<keyword id="KW-1133">Transmembrane helix</keyword>
<keyword id="KW-0813">Transport</keyword>
<dbReference type="EMBL" id="CP000744">
    <property type="protein sequence ID" value="ABR81288.1"/>
    <property type="molecule type" value="Genomic_DNA"/>
</dbReference>
<dbReference type="RefSeq" id="WP_012074754.1">
    <property type="nucleotide sequence ID" value="NC_009656.1"/>
</dbReference>
<dbReference type="KEGG" id="pap:PSPA7_1587"/>
<dbReference type="HOGENOM" id="CLU_131462_1_0_6"/>
<dbReference type="UniPathway" id="UPA00030"/>
<dbReference type="Proteomes" id="UP000001582">
    <property type="component" value="Chromosome"/>
</dbReference>
<dbReference type="GO" id="GO:0005886">
    <property type="term" value="C:plasma membrane"/>
    <property type="evidence" value="ECO:0007669"/>
    <property type="project" value="UniProtKB-SubCell"/>
</dbReference>
<dbReference type="GO" id="GO:1901505">
    <property type="term" value="F:carbohydrate derivative transmembrane transporter activity"/>
    <property type="evidence" value="ECO:0007669"/>
    <property type="project" value="InterPro"/>
</dbReference>
<dbReference type="GO" id="GO:0009245">
    <property type="term" value="P:lipid A biosynthetic process"/>
    <property type="evidence" value="ECO:0007669"/>
    <property type="project" value="UniProtKB-UniRule"/>
</dbReference>
<dbReference type="GO" id="GO:0009103">
    <property type="term" value="P:lipopolysaccharide biosynthetic process"/>
    <property type="evidence" value="ECO:0007669"/>
    <property type="project" value="UniProtKB-UniRule"/>
</dbReference>
<dbReference type="FunFam" id="1.10.3730.20:FF:000028">
    <property type="entry name" value="Probable 4-amino-4-deoxy-L-arabinose-phosphoundecaprenol flippase subunit ArnF"/>
    <property type="match status" value="1"/>
</dbReference>
<dbReference type="Gene3D" id="1.10.3730.20">
    <property type="match status" value="1"/>
</dbReference>
<dbReference type="HAMAP" id="MF_00538">
    <property type="entry name" value="Flippase_ArnF"/>
    <property type="match status" value="1"/>
</dbReference>
<dbReference type="InterPro" id="IPR022832">
    <property type="entry name" value="Flippase_ArnF"/>
</dbReference>
<dbReference type="InterPro" id="IPR000390">
    <property type="entry name" value="Small_drug/metabolite_transptr"/>
</dbReference>
<dbReference type="NCBIfam" id="NF002816">
    <property type="entry name" value="PRK02971.1-2"/>
    <property type="match status" value="1"/>
</dbReference>
<dbReference type="PANTHER" id="PTHR30561:SF9">
    <property type="entry name" value="4-AMINO-4-DEOXY-L-ARABINOSE-PHOSPHOUNDECAPRENOL FLIPPASE SUBUNIT ARNF-RELATED"/>
    <property type="match status" value="1"/>
</dbReference>
<dbReference type="PANTHER" id="PTHR30561">
    <property type="entry name" value="SMR FAMILY PROTON-DEPENDENT DRUG EFFLUX TRANSPORTER SUGE"/>
    <property type="match status" value="1"/>
</dbReference>
<dbReference type="SUPFAM" id="SSF103481">
    <property type="entry name" value="Multidrug resistance efflux transporter EmrE"/>
    <property type="match status" value="1"/>
</dbReference>
<name>ARNF_PSEP7</name>
<accession>A6V1N6</accession>
<proteinExistence type="inferred from homology"/>
<feature type="chain" id="PRO_0000382010" description="Probable 4-amino-4-deoxy-L-arabinose-phosphoundecaprenol flippase subunit ArnF">
    <location>
        <begin position="1"/>
        <end position="137"/>
    </location>
</feature>
<feature type="topological domain" description="Cytoplasmic" evidence="1">
    <location>
        <begin position="1"/>
        <end position="5"/>
    </location>
</feature>
<feature type="transmembrane region" description="Helical" evidence="1">
    <location>
        <begin position="6"/>
        <end position="26"/>
    </location>
</feature>
<feature type="topological domain" description="Periplasmic" evidence="1">
    <location>
        <begin position="27"/>
        <end position="44"/>
    </location>
</feature>
<feature type="transmembrane region" description="Helical" evidence="1">
    <location>
        <begin position="45"/>
        <end position="65"/>
    </location>
</feature>
<feature type="topological domain" description="Cytoplasmic" evidence="1">
    <location>
        <begin position="66"/>
        <end position="76"/>
    </location>
</feature>
<feature type="transmembrane region" description="Helical" evidence="1">
    <location>
        <begin position="77"/>
        <end position="97"/>
    </location>
</feature>
<feature type="topological domain" description="Periplasmic" evidence="1">
    <location>
        <begin position="98"/>
        <end position="100"/>
    </location>
</feature>
<feature type="transmembrane region" description="Helical" evidence="1">
    <location>
        <begin position="101"/>
        <end position="121"/>
    </location>
</feature>
<feature type="topological domain" description="Cytoplasmic" evidence="1">
    <location>
        <begin position="122"/>
        <end position="137"/>
    </location>
</feature>
<evidence type="ECO:0000255" key="1">
    <source>
        <dbReference type="HAMAP-Rule" id="MF_00538"/>
    </source>
</evidence>
<gene>
    <name evidence="1" type="primary">arnF</name>
    <name type="ordered locus">PSPA7_1587</name>
</gene>
<reference key="1">
    <citation type="submission" date="2007-06" db="EMBL/GenBank/DDBJ databases">
        <authorList>
            <person name="Dodson R.J."/>
            <person name="Harkins D."/>
            <person name="Paulsen I.T."/>
        </authorList>
    </citation>
    <scope>NUCLEOTIDE SEQUENCE [LARGE SCALE GENOMIC DNA]</scope>
    <source>
        <strain>DSM 24068 / PA7</strain>
    </source>
</reference>